<accession>P00750</accession>
<accession>A8K022</accession>
<accession>B2R8E8</accession>
<accession>Q15103</accession>
<accession>Q503B0</accession>
<accession>Q6PJA5</accession>
<accession>Q7Z7N2</accession>
<accession>Q86YK8</accession>
<accession>Q9BU99</accession>
<accession>Q9BZW1</accession>
<proteinExistence type="evidence at protein level"/>
<gene>
    <name evidence="25" type="primary">PLAT</name>
</gene>
<protein>
    <recommendedName>
        <fullName evidence="23">Tissue-type plasminogen activator</fullName>
        <shortName>t-PA</shortName>
        <shortName>t-plasminogen activator</shortName>
        <shortName>tPA</shortName>
        <ecNumber>3.4.21.68</ecNumber>
    </recommendedName>
    <innName>Alteplase</innName>
    <innName>Reteplase</innName>
    <component>
        <recommendedName>
            <fullName>Tissue-type plasminogen activator chain A</fullName>
        </recommendedName>
    </component>
    <component>
        <recommendedName>
            <fullName>Tissue-type plasminogen activator chain B</fullName>
        </recommendedName>
    </component>
</protein>
<evidence type="ECO:0000250" key="1"/>
<evidence type="ECO:0000250" key="2">
    <source>
        <dbReference type="UniProtKB" id="P19637"/>
    </source>
</evidence>
<evidence type="ECO:0000255" key="3">
    <source>
        <dbReference type="PROSITE-ProRule" id="PRU00076"/>
    </source>
</evidence>
<evidence type="ECO:0000255" key="4">
    <source>
        <dbReference type="PROSITE-ProRule" id="PRU00121"/>
    </source>
</evidence>
<evidence type="ECO:0000255" key="5">
    <source>
        <dbReference type="PROSITE-ProRule" id="PRU00274"/>
    </source>
</evidence>
<evidence type="ECO:0000255" key="6">
    <source>
        <dbReference type="PROSITE-ProRule" id="PRU00478"/>
    </source>
</evidence>
<evidence type="ECO:0000269" key="7">
    <source>
    </source>
</evidence>
<evidence type="ECO:0000269" key="8">
    <source>
    </source>
</evidence>
<evidence type="ECO:0000269" key="9">
    <source>
    </source>
</evidence>
<evidence type="ECO:0000269" key="10">
    <source>
    </source>
</evidence>
<evidence type="ECO:0000269" key="11">
    <source>
    </source>
</evidence>
<evidence type="ECO:0000269" key="12">
    <source>
    </source>
</evidence>
<evidence type="ECO:0000269" key="13">
    <source>
    </source>
</evidence>
<evidence type="ECO:0000269" key="14">
    <source>
    </source>
</evidence>
<evidence type="ECO:0000269" key="15">
    <source>
    </source>
</evidence>
<evidence type="ECO:0000269" key="16">
    <source>
    </source>
</evidence>
<evidence type="ECO:0000269" key="17">
    <source ref="12"/>
</evidence>
<evidence type="ECO:0000269" key="18">
    <source ref="20"/>
</evidence>
<evidence type="ECO:0000303" key="19">
    <source>
    </source>
</evidence>
<evidence type="ECO:0000303" key="20">
    <source>
    </source>
</evidence>
<evidence type="ECO:0000303" key="21">
    <source>
    </source>
</evidence>
<evidence type="ECO:0000303" key="22">
    <source ref="8"/>
</evidence>
<evidence type="ECO:0000305" key="23"/>
<evidence type="ECO:0000305" key="24">
    <source>
    </source>
</evidence>
<evidence type="ECO:0000312" key="25">
    <source>
        <dbReference type="HGNC" id="HGNC:9051"/>
    </source>
</evidence>
<evidence type="ECO:0007829" key="26">
    <source>
        <dbReference type="PDB" id="1A5H"/>
    </source>
</evidence>
<evidence type="ECO:0007829" key="27">
    <source>
        <dbReference type="PDB" id="1BDA"/>
    </source>
</evidence>
<evidence type="ECO:0007829" key="28">
    <source>
        <dbReference type="PDB" id="1PK2"/>
    </source>
</evidence>
<evidence type="ECO:0007829" key="29">
    <source>
        <dbReference type="PDB" id="1PML"/>
    </source>
</evidence>
<evidence type="ECO:0007829" key="30">
    <source>
        <dbReference type="PDB" id="1RTF"/>
    </source>
</evidence>
<evidence type="ECO:0007829" key="31">
    <source>
        <dbReference type="PDB" id="1TPG"/>
    </source>
</evidence>
<evidence type="ECO:0007829" key="32">
    <source>
        <dbReference type="PDB" id="1TPM"/>
    </source>
</evidence>
<evidence type="ECO:0007829" key="33">
    <source>
        <dbReference type="PDB" id="5BRR"/>
    </source>
</evidence>
<organism>
    <name type="scientific">Homo sapiens</name>
    <name type="common">Human</name>
    <dbReference type="NCBI Taxonomy" id="9606"/>
    <lineage>
        <taxon>Eukaryota</taxon>
        <taxon>Metazoa</taxon>
        <taxon>Chordata</taxon>
        <taxon>Craniata</taxon>
        <taxon>Vertebrata</taxon>
        <taxon>Euteleostomi</taxon>
        <taxon>Mammalia</taxon>
        <taxon>Eutheria</taxon>
        <taxon>Euarchontoglires</taxon>
        <taxon>Primates</taxon>
        <taxon>Haplorrhini</taxon>
        <taxon>Catarrhini</taxon>
        <taxon>Hominidae</taxon>
        <taxon>Homo</taxon>
    </lineage>
</organism>
<dbReference type="EC" id="3.4.21.68"/>
<dbReference type="EMBL" id="L00153">
    <property type="protein sequence ID" value="AAB59510.1"/>
    <property type="molecule type" value="Genomic_DNA"/>
</dbReference>
<dbReference type="EMBL" id="L00141">
    <property type="protein sequence ID" value="AAB59510.1"/>
    <property type="status" value="JOINED"/>
    <property type="molecule type" value="Genomic_DNA"/>
</dbReference>
<dbReference type="EMBL" id="L00142">
    <property type="protein sequence ID" value="AAB59510.1"/>
    <property type="status" value="JOINED"/>
    <property type="molecule type" value="Genomic_DNA"/>
</dbReference>
<dbReference type="EMBL" id="L00143">
    <property type="protein sequence ID" value="AAB59510.1"/>
    <property type="status" value="JOINED"/>
    <property type="molecule type" value="Genomic_DNA"/>
</dbReference>
<dbReference type="EMBL" id="L00144">
    <property type="protein sequence ID" value="AAB59510.1"/>
    <property type="status" value="JOINED"/>
    <property type="molecule type" value="Genomic_DNA"/>
</dbReference>
<dbReference type="EMBL" id="L00145">
    <property type="protein sequence ID" value="AAB59510.1"/>
    <property type="status" value="JOINED"/>
    <property type="molecule type" value="Genomic_DNA"/>
</dbReference>
<dbReference type="EMBL" id="L00146">
    <property type="protein sequence ID" value="AAB59510.1"/>
    <property type="status" value="JOINED"/>
    <property type="molecule type" value="Genomic_DNA"/>
</dbReference>
<dbReference type="EMBL" id="L00147">
    <property type="protein sequence ID" value="AAB59510.1"/>
    <property type="status" value="JOINED"/>
    <property type="molecule type" value="Genomic_DNA"/>
</dbReference>
<dbReference type="EMBL" id="L00148">
    <property type="protein sequence ID" value="AAB59510.1"/>
    <property type="status" value="JOINED"/>
    <property type="molecule type" value="Genomic_DNA"/>
</dbReference>
<dbReference type="EMBL" id="L00149">
    <property type="protein sequence ID" value="AAB59510.1"/>
    <property type="status" value="JOINED"/>
    <property type="molecule type" value="Genomic_DNA"/>
</dbReference>
<dbReference type="EMBL" id="L00150">
    <property type="protein sequence ID" value="AAB59510.1"/>
    <property type="status" value="JOINED"/>
    <property type="molecule type" value="Genomic_DNA"/>
</dbReference>
<dbReference type="EMBL" id="L00151">
    <property type="protein sequence ID" value="AAB59510.1"/>
    <property type="status" value="JOINED"/>
    <property type="molecule type" value="Genomic_DNA"/>
</dbReference>
<dbReference type="EMBL" id="K03021">
    <property type="protein sequence ID" value="AAA98809.1"/>
    <property type="molecule type" value="Genomic_DNA"/>
</dbReference>
<dbReference type="EMBL" id="M15518">
    <property type="protein sequence ID" value="AAA60111.1"/>
    <property type="molecule type" value="mRNA"/>
</dbReference>
<dbReference type="EMBL" id="M18182">
    <property type="protein sequence ID" value="AAA36800.1"/>
    <property type="molecule type" value="mRNA"/>
</dbReference>
<dbReference type="EMBL" id="X07393">
    <property type="protein sequence ID" value="CAA30302.1"/>
    <property type="molecule type" value="mRNA"/>
</dbReference>
<dbReference type="EMBL" id="X13097">
    <property type="protein sequence ID" value="CAA31489.1"/>
    <property type="molecule type" value="mRNA"/>
</dbReference>
<dbReference type="EMBL" id="AF260825">
    <property type="protein sequence ID" value="AAK11956.1"/>
    <property type="molecule type" value="mRNA"/>
</dbReference>
<dbReference type="EMBL" id="AY221101">
    <property type="protein sequence ID" value="AAO34406.1"/>
    <property type="molecule type" value="mRNA"/>
</dbReference>
<dbReference type="EMBL" id="AK289387">
    <property type="protein sequence ID" value="BAF82076.1"/>
    <property type="molecule type" value="mRNA"/>
</dbReference>
<dbReference type="EMBL" id="AK290575">
    <property type="protein sequence ID" value="BAF83264.1"/>
    <property type="molecule type" value="mRNA"/>
</dbReference>
<dbReference type="EMBL" id="AK313342">
    <property type="protein sequence ID" value="BAG36145.1"/>
    <property type="molecule type" value="mRNA"/>
</dbReference>
<dbReference type="EMBL" id="BT007060">
    <property type="protein sequence ID" value="AAP35709.1"/>
    <property type="molecule type" value="mRNA"/>
</dbReference>
<dbReference type="EMBL" id="AY291060">
    <property type="protein sequence ID" value="AAP34246.1"/>
    <property type="molecule type" value="Genomic_DNA"/>
</dbReference>
<dbReference type="EMBL" id="CH471080">
    <property type="protein sequence ID" value="EAW63235.1"/>
    <property type="molecule type" value="Genomic_DNA"/>
</dbReference>
<dbReference type="EMBL" id="CH471080">
    <property type="protein sequence ID" value="EAW63233.1"/>
    <property type="molecule type" value="Genomic_DNA"/>
</dbReference>
<dbReference type="EMBL" id="BC002795">
    <property type="protein sequence ID" value="AAH02795.3"/>
    <property type="molecule type" value="mRNA"/>
</dbReference>
<dbReference type="EMBL" id="BC007231">
    <property type="protein sequence ID" value="AAH07231.1"/>
    <property type="molecule type" value="mRNA"/>
</dbReference>
<dbReference type="EMBL" id="BC013968">
    <property type="protein sequence ID" value="AAH13968.3"/>
    <property type="molecule type" value="mRNA"/>
</dbReference>
<dbReference type="EMBL" id="BC018636">
    <property type="protein sequence ID" value="AAH18636.3"/>
    <property type="molecule type" value="mRNA"/>
</dbReference>
<dbReference type="EMBL" id="BC095403">
    <property type="protein sequence ID" value="AAH95403.1"/>
    <property type="molecule type" value="mRNA"/>
</dbReference>
<dbReference type="EMBL" id="M11890">
    <property type="protein sequence ID" value="AAA61213.1"/>
    <property type="molecule type" value="Genomic_DNA"/>
</dbReference>
<dbReference type="EMBL" id="M11889">
    <property type="protein sequence ID" value="AAA61213.1"/>
    <property type="status" value="JOINED"/>
    <property type="molecule type" value="Genomic_DNA"/>
</dbReference>
<dbReference type="EMBL" id="D01096">
    <property type="protein sequence ID" value="BAA00881.1"/>
    <property type="molecule type" value="mRNA"/>
</dbReference>
<dbReference type="EMBL" id="V00570">
    <property type="protein sequence ID" value="CAA23833.1"/>
    <property type="molecule type" value="mRNA"/>
</dbReference>
<dbReference type="CCDS" id="CCDS6126.1">
    <molecule id="P00750-1"/>
</dbReference>
<dbReference type="CCDS" id="CCDS6127.1">
    <molecule id="P00750-3"/>
</dbReference>
<dbReference type="PIR" id="A94004">
    <property type="entry name" value="UKHUT"/>
</dbReference>
<dbReference type="PIR" id="I38098">
    <property type="entry name" value="I38098"/>
</dbReference>
<dbReference type="RefSeq" id="NP_000921.1">
    <molecule id="P00750-1"/>
    <property type="nucleotide sequence ID" value="NM_000930.5"/>
</dbReference>
<dbReference type="RefSeq" id="NP_001306118.1">
    <property type="nucleotide sequence ID" value="NM_001319189.1"/>
</dbReference>
<dbReference type="RefSeq" id="NP_127509.1">
    <molecule id="P00750-3"/>
    <property type="nucleotide sequence ID" value="NM_033011.4"/>
</dbReference>
<dbReference type="PDB" id="1A5H">
    <property type="method" value="X-ray"/>
    <property type="resolution" value="2.90 A"/>
    <property type="chains" value="A/B=311-562, C/D=298-304"/>
</dbReference>
<dbReference type="PDB" id="1BDA">
    <property type="method" value="X-ray"/>
    <property type="resolution" value="3.35 A"/>
    <property type="chains" value="A/B=298-562"/>
</dbReference>
<dbReference type="PDB" id="1PK2">
    <property type="method" value="NMR"/>
    <property type="chains" value="A=209-298"/>
</dbReference>
<dbReference type="PDB" id="1PML">
    <property type="method" value="X-ray"/>
    <property type="resolution" value="2.38 A"/>
    <property type="chains" value="A/B/C=213-298"/>
</dbReference>
<dbReference type="PDB" id="1RTF">
    <property type="method" value="X-ray"/>
    <property type="resolution" value="2.30 A"/>
    <property type="chains" value="B=311-562"/>
</dbReference>
<dbReference type="PDB" id="1TPG">
    <property type="method" value="NMR"/>
    <property type="chains" value="A=36-126"/>
</dbReference>
<dbReference type="PDB" id="1TPK">
    <property type="method" value="X-ray"/>
    <property type="resolution" value="2.40 A"/>
    <property type="chains" value="A/B/C=211-298"/>
</dbReference>
<dbReference type="PDB" id="1TPM">
    <property type="method" value="NMR"/>
    <property type="chains" value="A=36-85"/>
</dbReference>
<dbReference type="PDB" id="1TPN">
    <property type="method" value="NMR"/>
    <property type="chains" value="A=36-85"/>
</dbReference>
<dbReference type="PDB" id="5BRR">
    <property type="method" value="X-ray"/>
    <property type="resolution" value="3.16 A"/>
    <property type="chains" value="E=311-562"/>
</dbReference>
<dbReference type="PDB" id="5ZLZ">
    <property type="method" value="X-ray"/>
    <property type="resolution" value="3.58 A"/>
    <property type="chains" value="E=311-561"/>
</dbReference>
<dbReference type="PDBsum" id="1A5H"/>
<dbReference type="PDBsum" id="1BDA"/>
<dbReference type="PDBsum" id="1PK2"/>
<dbReference type="PDBsum" id="1PML"/>
<dbReference type="PDBsum" id="1RTF"/>
<dbReference type="PDBsum" id="1TPG"/>
<dbReference type="PDBsum" id="1TPK"/>
<dbReference type="PDBsum" id="1TPM"/>
<dbReference type="PDBsum" id="1TPN"/>
<dbReference type="PDBsum" id="5BRR"/>
<dbReference type="PDBsum" id="5ZLZ"/>
<dbReference type="SMR" id="P00750"/>
<dbReference type="BioGRID" id="111343">
    <property type="interactions" value="57"/>
</dbReference>
<dbReference type="ComplexPortal" id="CPX-494">
    <property type="entry name" value="tPA-PAI-1 complex"/>
</dbReference>
<dbReference type="CORUM" id="P00750"/>
<dbReference type="ELM" id="P00750"/>
<dbReference type="FunCoup" id="P00750">
    <property type="interactions" value="631"/>
</dbReference>
<dbReference type="IntAct" id="P00750">
    <property type="interactions" value="27"/>
</dbReference>
<dbReference type="MINT" id="P00750"/>
<dbReference type="STRING" id="9606.ENSP00000220809"/>
<dbReference type="BindingDB" id="P00750"/>
<dbReference type="ChEMBL" id="CHEMBL1873"/>
<dbReference type="DrugBank" id="DB02463">
    <property type="generic name" value="2-(2-Hydroxy-Phenyl)-1h-Indole-5-Carboxamidine"/>
</dbReference>
<dbReference type="DrugBank" id="DB07684">
    <property type="generic name" value="5-(DIMETHYLAMINO)-2-NAPHTHALENESULFONIC ACID"/>
</dbReference>
<dbReference type="DrugBank" id="DB00513">
    <property type="generic name" value="Aminocaproic acid"/>
</dbReference>
<dbReference type="DrugBank" id="DB09228">
    <property type="generic name" value="Conestat alfa"/>
</dbReference>
<dbReference type="DrugBank" id="DB09213">
    <property type="generic name" value="Dexibuprofen"/>
</dbReference>
<dbReference type="DrugBank" id="DB06404">
    <property type="generic name" value="Human C1-esterase inhibitor"/>
</dbReference>
<dbReference type="DrugBank" id="DB01088">
    <property type="generic name" value="Iloprost"/>
</dbReference>
<dbReference type="DrugBank" id="DB16701">
    <property type="generic name" value="Plasminogen"/>
</dbReference>
<dbReference type="DrugBank" id="DB05646">
    <property type="generic name" value="VT-111"/>
</dbReference>
<dbReference type="DrugCentral" id="P00750"/>
<dbReference type="GuidetoPHARMACOLOGY" id="2392"/>
<dbReference type="MEROPS" id="S01.232"/>
<dbReference type="GlyConnect" id="603">
    <property type="glycosylation" value="43 N-Linked glycans (3 sites), 1 O-Fuc glycan (1 site)"/>
</dbReference>
<dbReference type="GlyConnect" id="86">
    <property type="glycosylation" value="16 N-Linked glycans (1 site)"/>
</dbReference>
<dbReference type="GlyCosmos" id="P00750">
    <property type="glycosylation" value="4 sites, 104 glycans"/>
</dbReference>
<dbReference type="GlyGen" id="P00750">
    <property type="glycosylation" value="9 sites, 108 N-linked glycans (4 sites), 2 O-linked glycans (2 sites)"/>
</dbReference>
<dbReference type="iPTMnet" id="P00750"/>
<dbReference type="PhosphoSitePlus" id="P00750"/>
<dbReference type="BioMuta" id="PLAT"/>
<dbReference type="DMDM" id="137119"/>
<dbReference type="CPTAC" id="non-CPTAC-1164"/>
<dbReference type="jPOST" id="P00750"/>
<dbReference type="MassIVE" id="P00750"/>
<dbReference type="PaxDb" id="9606-ENSP00000220809"/>
<dbReference type="PeptideAtlas" id="P00750"/>
<dbReference type="ProteomicsDB" id="51281">
    <molecule id="P00750-1"/>
</dbReference>
<dbReference type="ProteomicsDB" id="51282">
    <molecule id="P00750-2"/>
</dbReference>
<dbReference type="ProteomicsDB" id="51283">
    <molecule id="P00750-3"/>
</dbReference>
<dbReference type="ProteomicsDB" id="51284">
    <molecule id="P00750-4"/>
</dbReference>
<dbReference type="Antibodypedia" id="998">
    <property type="antibodies" value="791 antibodies from 39 providers"/>
</dbReference>
<dbReference type="DNASU" id="5327"/>
<dbReference type="Ensembl" id="ENST00000220809.9">
    <molecule id="P00750-1"/>
    <property type="protein sequence ID" value="ENSP00000220809.4"/>
    <property type="gene ID" value="ENSG00000104368.19"/>
</dbReference>
<dbReference type="Ensembl" id="ENST00000352041.7">
    <molecule id="P00750-3"/>
    <property type="protein sequence ID" value="ENSP00000270188.6"/>
    <property type="gene ID" value="ENSG00000104368.19"/>
</dbReference>
<dbReference type="Ensembl" id="ENST00000429089.6">
    <molecule id="P00750-1"/>
    <property type="protein sequence ID" value="ENSP00000392045.2"/>
    <property type="gene ID" value="ENSG00000104368.19"/>
</dbReference>
<dbReference type="Ensembl" id="ENST00000679151.1">
    <molecule id="P00750-1"/>
    <property type="protein sequence ID" value="ENSP00000504311.1"/>
    <property type="gene ID" value="ENSG00000104368.19"/>
</dbReference>
<dbReference type="GeneID" id="5327"/>
<dbReference type="KEGG" id="hsa:5327"/>
<dbReference type="MANE-Select" id="ENST00000220809.9">
    <property type="protein sequence ID" value="ENSP00000220809.4"/>
    <property type="RefSeq nucleotide sequence ID" value="NM_000930.5"/>
    <property type="RefSeq protein sequence ID" value="NP_000921.1"/>
</dbReference>
<dbReference type="UCSC" id="uc003xos.3">
    <molecule id="P00750-1"/>
    <property type="organism name" value="human"/>
</dbReference>
<dbReference type="AGR" id="HGNC:9051"/>
<dbReference type="CTD" id="5327"/>
<dbReference type="DisGeNET" id="5327"/>
<dbReference type="GeneCards" id="PLAT"/>
<dbReference type="HGNC" id="HGNC:9051">
    <property type="gene designation" value="PLAT"/>
</dbReference>
<dbReference type="HPA" id="ENSG00000104368">
    <property type="expression patterns" value="Tissue enhanced (parathyroid gland, urinary bladder)"/>
</dbReference>
<dbReference type="MalaCards" id="PLAT"/>
<dbReference type="MIM" id="173370">
    <property type="type" value="gene"/>
</dbReference>
<dbReference type="neXtProt" id="NX_P00750"/>
<dbReference type="OpenTargets" id="ENSG00000104368"/>
<dbReference type="Orphanet" id="480528">
    <property type="disease" value="Lethal hydranencephaly-diaphragmatic hernia syndrome"/>
</dbReference>
<dbReference type="PharmGKB" id="PA33381"/>
<dbReference type="VEuPathDB" id="HostDB:ENSG00000104368"/>
<dbReference type="eggNOG" id="KOG3627">
    <property type="taxonomic scope" value="Eukaryota"/>
</dbReference>
<dbReference type="GeneTree" id="ENSGT00940000158930"/>
<dbReference type="HOGENOM" id="CLU_006842_18_4_1"/>
<dbReference type="InParanoid" id="P00750"/>
<dbReference type="OrthoDB" id="6020543at2759"/>
<dbReference type="PAN-GO" id="P00750">
    <property type="GO annotations" value="5 GO annotations based on evolutionary models"/>
</dbReference>
<dbReference type="PhylomeDB" id="P00750"/>
<dbReference type="TreeFam" id="TF329901"/>
<dbReference type="BRENDA" id="3.4.21.68">
    <property type="organism ID" value="2681"/>
</dbReference>
<dbReference type="PathwayCommons" id="P00750"/>
<dbReference type="Reactome" id="R-HSA-186797">
    <property type="pathway name" value="Signaling by PDGF"/>
</dbReference>
<dbReference type="Reactome" id="R-HSA-75205">
    <property type="pathway name" value="Dissolution of Fibrin Clot"/>
</dbReference>
<dbReference type="SignaLink" id="P00750"/>
<dbReference type="SIGNOR" id="P00750"/>
<dbReference type="BioGRID-ORCS" id="5327">
    <property type="hits" value="12 hits in 1164 CRISPR screens"/>
</dbReference>
<dbReference type="ChiTaRS" id="PLAT">
    <property type="organism name" value="human"/>
</dbReference>
<dbReference type="EvolutionaryTrace" id="P00750"/>
<dbReference type="GeneWiki" id="Tissue_plasminogen_activator"/>
<dbReference type="GenomeRNAi" id="5327"/>
<dbReference type="Pharos" id="P00750">
    <property type="development level" value="Tclin"/>
</dbReference>
<dbReference type="PRO" id="PR:P00750"/>
<dbReference type="Proteomes" id="UP000005640">
    <property type="component" value="Chromosome 8"/>
</dbReference>
<dbReference type="RNAct" id="P00750">
    <property type="molecule type" value="protein"/>
</dbReference>
<dbReference type="Bgee" id="ENSG00000104368">
    <property type="expression patterns" value="Expressed in stromal cell of endometrium and 191 other cell types or tissues"/>
</dbReference>
<dbReference type="ExpressionAtlas" id="P00750">
    <property type="expression patterns" value="baseline and differential"/>
</dbReference>
<dbReference type="GO" id="GO:0045177">
    <property type="term" value="C:apical part of cell"/>
    <property type="evidence" value="ECO:0007669"/>
    <property type="project" value="Ensembl"/>
</dbReference>
<dbReference type="GO" id="GO:0009986">
    <property type="term" value="C:cell surface"/>
    <property type="evidence" value="ECO:0000314"/>
    <property type="project" value="BHF-UCL"/>
</dbReference>
<dbReference type="GO" id="GO:0005737">
    <property type="term" value="C:cytoplasm"/>
    <property type="evidence" value="ECO:0000314"/>
    <property type="project" value="BHF-UCL"/>
</dbReference>
<dbReference type="GO" id="GO:0070062">
    <property type="term" value="C:extracellular exosome"/>
    <property type="evidence" value="ECO:0007005"/>
    <property type="project" value="UniProtKB"/>
</dbReference>
<dbReference type="GO" id="GO:0005576">
    <property type="term" value="C:extracellular region"/>
    <property type="evidence" value="ECO:0000304"/>
    <property type="project" value="Reactome"/>
</dbReference>
<dbReference type="GO" id="GO:0005615">
    <property type="term" value="C:extracellular space"/>
    <property type="evidence" value="ECO:0000318"/>
    <property type="project" value="GO_Central"/>
</dbReference>
<dbReference type="GO" id="GO:0098978">
    <property type="term" value="C:glutamatergic synapse"/>
    <property type="evidence" value="ECO:0007669"/>
    <property type="project" value="Ensembl"/>
</dbReference>
<dbReference type="GO" id="GO:0098685">
    <property type="term" value="C:Schaffer collateral - CA1 synapse"/>
    <property type="evidence" value="ECO:0007669"/>
    <property type="project" value="Ensembl"/>
</dbReference>
<dbReference type="GO" id="GO:0030141">
    <property type="term" value="C:secretory granule"/>
    <property type="evidence" value="ECO:0007669"/>
    <property type="project" value="Ensembl"/>
</dbReference>
<dbReference type="GO" id="GO:0097180">
    <property type="term" value="C:serine protease inhibitor complex"/>
    <property type="evidence" value="ECO:0000353"/>
    <property type="project" value="ComplexPortal"/>
</dbReference>
<dbReference type="GO" id="GO:0051219">
    <property type="term" value="F:phosphoprotein binding"/>
    <property type="evidence" value="ECO:0000353"/>
    <property type="project" value="AgBase"/>
</dbReference>
<dbReference type="GO" id="GO:0004252">
    <property type="term" value="F:serine-type endopeptidase activity"/>
    <property type="evidence" value="ECO:0000314"/>
    <property type="project" value="BHF-UCL"/>
</dbReference>
<dbReference type="GO" id="GO:0005102">
    <property type="term" value="F:signaling receptor binding"/>
    <property type="evidence" value="ECO:0000353"/>
    <property type="project" value="AgBase"/>
</dbReference>
<dbReference type="GO" id="GO:0007596">
    <property type="term" value="P:blood coagulation"/>
    <property type="evidence" value="ECO:0000304"/>
    <property type="project" value="ProtInc"/>
</dbReference>
<dbReference type="GO" id="GO:0042730">
    <property type="term" value="P:fibrinolysis"/>
    <property type="evidence" value="ECO:0000304"/>
    <property type="project" value="Reactome"/>
</dbReference>
<dbReference type="GO" id="GO:0051918">
    <property type="term" value="P:negative regulation of fibrinolysis"/>
    <property type="evidence" value="ECO:0000303"/>
    <property type="project" value="ComplexPortal"/>
</dbReference>
<dbReference type="GO" id="GO:0010757">
    <property type="term" value="P:negative regulation of plasminogen activation"/>
    <property type="evidence" value="ECO:0000303"/>
    <property type="project" value="ComplexPortal"/>
</dbReference>
<dbReference type="GO" id="GO:0045861">
    <property type="term" value="P:negative regulation of proteolysis"/>
    <property type="evidence" value="ECO:0000314"/>
    <property type="project" value="BHF-UCL"/>
</dbReference>
<dbReference type="GO" id="GO:0031639">
    <property type="term" value="P:plasminogen activation"/>
    <property type="evidence" value="ECO:0000314"/>
    <property type="project" value="UniProtKB"/>
</dbReference>
<dbReference type="GO" id="GO:0048008">
    <property type="term" value="P:platelet-derived growth factor receptor signaling pathway"/>
    <property type="evidence" value="ECO:0000318"/>
    <property type="project" value="GO_Central"/>
</dbReference>
<dbReference type="GO" id="GO:0060468">
    <property type="term" value="P:prevention of polyspermy"/>
    <property type="evidence" value="ECO:0000250"/>
    <property type="project" value="UniProtKB"/>
</dbReference>
<dbReference type="GO" id="GO:0036211">
    <property type="term" value="P:protein modification process"/>
    <property type="evidence" value="ECO:0000304"/>
    <property type="project" value="ProtInc"/>
</dbReference>
<dbReference type="GO" id="GO:0006508">
    <property type="term" value="P:proteolysis"/>
    <property type="evidence" value="ECO:0000304"/>
    <property type="project" value="ProtInc"/>
</dbReference>
<dbReference type="GO" id="GO:0001666">
    <property type="term" value="P:response to hypoxia"/>
    <property type="evidence" value="ECO:0007669"/>
    <property type="project" value="Ensembl"/>
</dbReference>
<dbReference type="GO" id="GO:0014909">
    <property type="term" value="P:smooth muscle cell migration"/>
    <property type="evidence" value="ECO:0000318"/>
    <property type="project" value="GO_Central"/>
</dbReference>
<dbReference type="GO" id="GO:0099183">
    <property type="term" value="P:trans-synaptic signaling by BDNF, modulating synaptic transmission"/>
    <property type="evidence" value="ECO:0007669"/>
    <property type="project" value="Ensembl"/>
</dbReference>
<dbReference type="CDD" id="cd00061">
    <property type="entry name" value="FN1"/>
    <property type="match status" value="1"/>
</dbReference>
<dbReference type="CDD" id="cd00108">
    <property type="entry name" value="KR"/>
    <property type="match status" value="2"/>
</dbReference>
<dbReference type="CDD" id="cd00190">
    <property type="entry name" value="Tryp_SPc"/>
    <property type="match status" value="1"/>
</dbReference>
<dbReference type="FunFam" id="2.40.10.10:FF:000054">
    <property type="entry name" value="Complement C1r subcomponent"/>
    <property type="match status" value="1"/>
</dbReference>
<dbReference type="FunFam" id="2.10.70.10:FF:000043">
    <property type="entry name" value="Plasminogen activator"/>
    <property type="match status" value="1"/>
</dbReference>
<dbReference type="FunFam" id="2.10.25.10:FF:000483">
    <property type="entry name" value="Tissue-type plasminogen activator"/>
    <property type="match status" value="1"/>
</dbReference>
<dbReference type="FunFam" id="2.40.10.10:FF:000058">
    <property type="entry name" value="Tissue-type plasminogen activator"/>
    <property type="match status" value="1"/>
</dbReference>
<dbReference type="FunFam" id="2.40.20.10:FF:000001">
    <property type="entry name" value="Urokinase-type plasminogen activator"/>
    <property type="match status" value="2"/>
</dbReference>
<dbReference type="Gene3D" id="2.10.70.10">
    <property type="entry name" value="Complement Module, domain 1"/>
    <property type="match status" value="1"/>
</dbReference>
<dbReference type="Gene3D" id="2.10.25.10">
    <property type="entry name" value="Laminin"/>
    <property type="match status" value="1"/>
</dbReference>
<dbReference type="Gene3D" id="2.40.20.10">
    <property type="entry name" value="Plasminogen Kringle 4"/>
    <property type="match status" value="2"/>
</dbReference>
<dbReference type="Gene3D" id="2.40.10.10">
    <property type="entry name" value="Trypsin-like serine proteases"/>
    <property type="match status" value="2"/>
</dbReference>
<dbReference type="InterPro" id="IPR000742">
    <property type="entry name" value="EGF-like_dom"/>
</dbReference>
<dbReference type="InterPro" id="IPR000083">
    <property type="entry name" value="Fibronectin_type1"/>
</dbReference>
<dbReference type="InterPro" id="IPR000001">
    <property type="entry name" value="Kringle"/>
</dbReference>
<dbReference type="InterPro" id="IPR013806">
    <property type="entry name" value="Kringle-like"/>
</dbReference>
<dbReference type="InterPro" id="IPR018056">
    <property type="entry name" value="Kringle_CS"/>
</dbReference>
<dbReference type="InterPro" id="IPR038178">
    <property type="entry name" value="Kringle_sf"/>
</dbReference>
<dbReference type="InterPro" id="IPR009003">
    <property type="entry name" value="Peptidase_S1_PA"/>
</dbReference>
<dbReference type="InterPro" id="IPR043504">
    <property type="entry name" value="Peptidase_S1_PA_chymotrypsin"/>
</dbReference>
<dbReference type="InterPro" id="IPR001314">
    <property type="entry name" value="Peptidase_S1A"/>
</dbReference>
<dbReference type="InterPro" id="IPR050127">
    <property type="entry name" value="Serine_Proteases_S1"/>
</dbReference>
<dbReference type="InterPro" id="IPR026280">
    <property type="entry name" value="Tissue_plasm_act"/>
</dbReference>
<dbReference type="InterPro" id="IPR001254">
    <property type="entry name" value="Trypsin_dom"/>
</dbReference>
<dbReference type="InterPro" id="IPR018114">
    <property type="entry name" value="TRYPSIN_HIS"/>
</dbReference>
<dbReference type="InterPro" id="IPR033116">
    <property type="entry name" value="TRYPSIN_SER"/>
</dbReference>
<dbReference type="PANTHER" id="PTHR24264:SF42">
    <property type="entry name" value="TISSUE-TYPE PLASMINOGEN ACTIVATOR"/>
    <property type="match status" value="1"/>
</dbReference>
<dbReference type="PANTHER" id="PTHR24264">
    <property type="entry name" value="TRYPSIN-RELATED"/>
    <property type="match status" value="1"/>
</dbReference>
<dbReference type="Pfam" id="PF00008">
    <property type="entry name" value="EGF"/>
    <property type="match status" value="1"/>
</dbReference>
<dbReference type="Pfam" id="PF00039">
    <property type="entry name" value="fn1"/>
    <property type="match status" value="1"/>
</dbReference>
<dbReference type="Pfam" id="PF00051">
    <property type="entry name" value="Kringle"/>
    <property type="match status" value="2"/>
</dbReference>
<dbReference type="Pfam" id="PF00089">
    <property type="entry name" value="Trypsin"/>
    <property type="match status" value="1"/>
</dbReference>
<dbReference type="PIRSF" id="PIRSF001145">
    <property type="entry name" value="Tissue_plasm_act"/>
    <property type="match status" value="1"/>
</dbReference>
<dbReference type="PRINTS" id="PR00722">
    <property type="entry name" value="CHYMOTRYPSIN"/>
</dbReference>
<dbReference type="PRINTS" id="PR00018">
    <property type="entry name" value="KRINGLE"/>
</dbReference>
<dbReference type="SMART" id="SM00058">
    <property type="entry name" value="FN1"/>
    <property type="match status" value="1"/>
</dbReference>
<dbReference type="SMART" id="SM00130">
    <property type="entry name" value="KR"/>
    <property type="match status" value="2"/>
</dbReference>
<dbReference type="SMART" id="SM00020">
    <property type="entry name" value="Tryp_SPc"/>
    <property type="match status" value="1"/>
</dbReference>
<dbReference type="SUPFAM" id="SSF57603">
    <property type="entry name" value="FnI-like domain"/>
    <property type="match status" value="1"/>
</dbReference>
<dbReference type="SUPFAM" id="SSF57440">
    <property type="entry name" value="Kringle-like"/>
    <property type="match status" value="2"/>
</dbReference>
<dbReference type="SUPFAM" id="SSF50494">
    <property type="entry name" value="Trypsin-like serine proteases"/>
    <property type="match status" value="1"/>
</dbReference>
<dbReference type="PROSITE" id="PS00022">
    <property type="entry name" value="EGF_1"/>
    <property type="match status" value="1"/>
</dbReference>
<dbReference type="PROSITE" id="PS01186">
    <property type="entry name" value="EGF_2"/>
    <property type="match status" value="1"/>
</dbReference>
<dbReference type="PROSITE" id="PS50026">
    <property type="entry name" value="EGF_3"/>
    <property type="match status" value="1"/>
</dbReference>
<dbReference type="PROSITE" id="PS01253">
    <property type="entry name" value="FN1_1"/>
    <property type="match status" value="1"/>
</dbReference>
<dbReference type="PROSITE" id="PS51091">
    <property type="entry name" value="FN1_2"/>
    <property type="match status" value="1"/>
</dbReference>
<dbReference type="PROSITE" id="PS00021">
    <property type="entry name" value="KRINGLE_1"/>
    <property type="match status" value="2"/>
</dbReference>
<dbReference type="PROSITE" id="PS50070">
    <property type="entry name" value="KRINGLE_2"/>
    <property type="match status" value="2"/>
</dbReference>
<dbReference type="PROSITE" id="PS50240">
    <property type="entry name" value="TRYPSIN_DOM"/>
    <property type="match status" value="1"/>
</dbReference>
<dbReference type="PROSITE" id="PS00134">
    <property type="entry name" value="TRYPSIN_HIS"/>
    <property type="match status" value="1"/>
</dbReference>
<dbReference type="PROSITE" id="PS00135">
    <property type="entry name" value="TRYPSIN_SER"/>
    <property type="match status" value="1"/>
</dbReference>
<sequence length="562" mass="62917">MDAMKRGLCCVLLLCGAVFVSPSQEIHARFRRGARSYQVICRDEKTQMIYQQHQSWLRPVLRSNRVEYCWCNSGRAQCHSVPVKSCSEPRCFNGGTCQQALYFSDFVCQCPEGFAGKCCEIDTRATCYEDQGISYRGTWSTAESGAECTNWNSSALAQKPYSGRRPDAIRLGLGNHNYCRNPDRDSKPWCYVFKAGKYSSEFCSTPACSEGNSDCYFGNGSAYRGTHSLTESGASCLPWNSMILIGKVYTAQNPSAQALGLGKHNYCRNPDGDAKPWCHVLKNRRLTWEYCDVPSCSTCGLRQYSQPQFRIKGGLFADIASHPWQAAIFAKHRRSPGERFLCGGILISSCWILSAAHCFQERFPPHHLTVILGRTYRVVPGEEEQKFEVEKYIVHKEFDDDTYDNDIALLQLKSDSSRCAQESSVVRTVCLPPADLQLPDWTECELSGYGKHEALSPFYSERLKEAHVRLYPSSRCTSQHLLNRTVTDNMLCAGDTRSGGPQANLHDACQGDSGGPLVCLNDGRMTLVGIISWGLGCGQKDVPGVYTKVTNYLDWIRDNMRP</sequence>
<keyword id="KW-0002">3D-structure</keyword>
<keyword id="KW-0025">Alternative splicing</keyword>
<keyword id="KW-0165">Cleavage on pair of basic residues</keyword>
<keyword id="KW-0903">Direct protein sequencing</keyword>
<keyword id="KW-1015">Disulfide bond</keyword>
<keyword id="KW-0245">EGF-like domain</keyword>
<keyword id="KW-0325">Glycoprotein</keyword>
<keyword id="KW-0378">Hydrolase</keyword>
<keyword id="KW-0420">Kringle</keyword>
<keyword id="KW-0582">Pharmaceutical</keyword>
<keyword id="KW-0617">Plasminogen activation</keyword>
<keyword id="KW-0645">Protease</keyword>
<keyword id="KW-1267">Proteomics identification</keyword>
<keyword id="KW-1185">Reference proteome</keyword>
<keyword id="KW-0677">Repeat</keyword>
<keyword id="KW-0964">Secreted</keyword>
<keyword id="KW-0720">Serine protease</keyword>
<keyword id="KW-0732">Signal</keyword>
<keyword id="KW-0865">Zymogen</keyword>
<comment type="function">
    <text evidence="2">Converts the abundant, but inactive, zymogen plasminogen to plasmin by hydrolyzing a single Arg-Val bond in plasminogen. By controlling plasmin-mediated proteolysis, it plays an important role in tissue remodeling and degradation, in cell migration and many other physiopathological events. During oocyte activation, plays a role in cortical granule reaction in the zona reaction, which contributes to the block to polyspermy (By similarity).</text>
</comment>
<comment type="catalytic activity">
    <reaction>
        <text>Specific cleavage of Arg-|-Val bond in plasminogen to form plasmin.</text>
        <dbReference type="EC" id="3.4.21.68"/>
    </reaction>
</comment>
<comment type="activity regulation">
    <text evidence="7 12">Inhibited by SERPINA5 (PubMed:10340997). Inhibited by SERPINE1 (PubMed:21925150).</text>
</comment>
<comment type="subunit">
    <text evidence="8 12 14">Heterodimer of chain A and chain B held by a disulfide bond. Forms a heterodimer with SERPINA5. Binds to fibrin with high affinity. This interaction leads to an increase in the catalytic efficiency of the enzyme between 100-fold and 1000-fold, due to an increase in affinity for plasminogen. Similarly, binding to heparin increases the activation of plasminogen. Binds to annexin A2, cytokeratin-8, fibronectin and laminin. Binds to mannose receptor and the low-density lipoprotein receptor-related protein (LRP1); these proteins are involved in TPA clearance. Yet unidentified interactions on endothelial cells and vascular smooth muscle cells (VSMC) lead to a 100-fold stimulation of plasminogen activation. In addition, binding to VSMC reduces TPA inhibition by PAI-1 by 30-fold. Binds LRP1B; binding is followed by internalization and degradation. Interacts with SERPINE1 (PubMed:21925150). In complex with SERPINE1, interacts with SORL1 (PubMed:15053742). Interacts with apyrase from Anopheles gambiae saliva; the interaction results in PLAT activation probably via an allosteric activation mechanism (PubMed:39294191).</text>
</comment>
<comment type="interaction">
    <interactant intactId="EBI-5605520">
        <id>P00750</id>
    </interactant>
    <interactant intactId="EBI-1223454">
        <id>P05155</id>
        <label>SERPING1</label>
    </interactant>
    <organismsDiffer>false</organismsDiffer>
    <experiments>2</experiments>
</comment>
<comment type="subcellular location">
    <subcellularLocation>
        <location>Secreted</location>
        <location>Extracellular space</location>
    </subcellularLocation>
</comment>
<comment type="alternative products">
    <event type="alternative splicing"/>
    <isoform>
        <id>P00750-1</id>
        <name>1</name>
        <name>Long</name>
        <sequence type="displayed"/>
    </isoform>
    <isoform>
        <id>P00750-2</id>
        <name>2</name>
        <name>Short</name>
        <sequence type="described" ref="VSP_005411 VSP_005412"/>
    </isoform>
    <isoform>
        <id>P00750-3</id>
        <name>3</name>
        <sequence type="described" ref="VSP_015957"/>
    </isoform>
    <isoform>
        <id>P00750-4</id>
        <name>4</name>
        <name>Neonatal</name>
        <sequence type="described" ref="VSP_028029 VSP_028030"/>
    </isoform>
</comment>
<comment type="tissue specificity">
    <text>Synthesized in numerous tissues (including tumors) and secreted into most extracellular body fluids, such as plasma, uterine fluid, saliva, gingival crevicular fluid, tears, seminal fluid, and milk.</text>
</comment>
<comment type="domain">
    <text>Both FN1 and one of the kringle domains are required for binding to fibrin.</text>
</comment>
<comment type="domain">
    <text>Both FN1 and EGF-like domains are important for binding to LRP1.</text>
</comment>
<comment type="domain">
    <text>The FN1 domain mediates binding to annexin A2.</text>
</comment>
<comment type="domain">
    <text>The second kringle domain is implicated in binding to cytokeratin-8 and to the endothelial cell surface binding site.</text>
</comment>
<comment type="PTM">
    <text>The single chain, almost fully active enzyme, can be further processed into a two-chain fully active form by a cleavage after Arg-310 catalyzed by plasmin, tissue kallikrein or factor Xa.</text>
</comment>
<comment type="PTM">
    <text evidence="11">Differential cell-specific N-linked glycosylation gives rise to two glycoforms, type I (glycosylated at Asn-219) and type II (not glycosylated at Asn-219). The single chain type I glycoform is less readily converted into the two-chain form by plasmin, and the two-chain type I glycoform has a lower activity than the two-chain type II glycoform in the presence of fibrin.</text>
</comment>
<comment type="PTM">
    <text evidence="11">N-glycosylation of Asn-152; the bound oligomannosidic glycan is involved in the interaction with the mannose receptor.</text>
</comment>
<comment type="PTM">
    <text evidence="11">Characterization of O-linked glycan was studied in Bowes melanoma cell line.</text>
</comment>
<comment type="disease">
    <text evidence="10">Increased activity of TPA results in increased fibrinolysis of fibrin blood clots that is associated with excessive bleeding. Defective release of TPA results in hypofibrinolysis that can lead to thrombosis or embolism.</text>
</comment>
<comment type="pharmaceutical">
    <text>Available under the names Activase (Genentech) and Retavase (Centocor and Roche) [Retavase is a fragment of TPA that contains kringle 2 and the protease domain; it was also known as BM 06.022]. Used in Acute Myocardial Infarction (AMI), in Acute Ischemic Stroke (AIS) and Pulmonary Embolism (PE) to initiate fibrinolysis.</text>
</comment>
<comment type="miscellaneous">
    <molecule>Isoform 2</molecule>
    <text evidence="23">May be produced at very low levels due to a premature stop codon in the mRNA, leading to nonsense-mediated mRNA decay.</text>
</comment>
<comment type="similarity">
    <text evidence="5">Belongs to the peptidase S1 family.</text>
</comment>
<comment type="online information" name="Wikipedia">
    <link uri="https://en.wikipedia.org/wiki/Tissue_plasminogen_Activator"/>
    <text>Tissue plasminogen activator entry</text>
</comment>
<comment type="online information" name="Activase">
    <link uri="https://www.activase.com/"/>
    <text>Clinical information on Activase</text>
</comment>
<reference key="1">
    <citation type="journal article" date="1983" name="Nature">
        <title>Cloning and expression of human tissue-type plasminogen activator cDNA in E. coli.</title>
        <authorList>
            <person name="Pennica D."/>
            <person name="Holmes W.E."/>
            <person name="Kohr W.J."/>
            <person name="Harkins R.N."/>
            <person name="Vehar G.A."/>
            <person name="Ward C.A."/>
            <person name="Bennett W.F."/>
            <person name="Yelverton E."/>
            <person name="Seeburg P.H."/>
            <person name="Heyneker H.L."/>
            <person name="Goeddel D.V."/>
            <person name="Collen D."/>
        </authorList>
    </citation>
    <scope>NUCLEOTIDE SEQUENCE [MRNA] (ISOFORM 1)</scope>
    <source>
        <tissue>Melanoma</tissue>
    </source>
</reference>
<reference key="2">
    <citation type="journal article" date="1984" name="Proc. Natl. Acad. Sci. U.S.A.">
        <title>The structure of the human tissue-type plasminogen activator gene: correlation of intron and exon structures to functional and structural domains.</title>
        <authorList>
            <person name="Ny T."/>
            <person name="Elgh F."/>
            <person name="Lund B."/>
        </authorList>
    </citation>
    <scope>NUCLEOTIDE SEQUENCE [GENOMIC DNA]</scope>
</reference>
<reference key="3">
    <citation type="journal article" date="1986" name="J. Biol. Chem.">
        <title>The human tissue plasminogen activator gene.</title>
        <authorList>
            <person name="Friezner Degen S.J."/>
            <person name="Rajput B."/>
            <person name="Reich E."/>
        </authorList>
    </citation>
    <scope>NUCLEOTIDE SEQUENCE [GENOMIC DNA]</scope>
</reference>
<reference key="4">
    <citation type="journal article" date="1986" name="Mol. Biol. Med.">
        <title>Cloning of cDNA coding for human tissue-type plasminogen activator and its expression in Escherichia coli.</title>
        <authorList>
            <person name="Harris T.J."/>
            <person name="Patel T."/>
            <person name="Marston F.A."/>
            <person name="Little S."/>
            <person name="Emtage J.S."/>
            <person name="Opdenakker G."/>
            <person name="Volckaert G."/>
            <person name="Rombauts W."/>
            <person name="Billiau A."/>
            <person name="Somer P."/>
        </authorList>
    </citation>
    <scope>NUCLEOTIDE SEQUENCE [MRNA] (ISOFORM 1)</scope>
</reference>
<reference key="5">
    <citation type="journal article" date="1987" name="DNA">
        <title>Expression of human uterine tissue-type plasminogen activator in mouse cells using BPV vectors.</title>
        <authorList>
            <person name="Reddy V.B."/>
            <person name="Garramone A.J."/>
            <person name="Sasak H."/>
            <person name="Wei C.-M."/>
            <person name="Watkins P."/>
            <person name="Galli J."/>
            <person name="Hsiung N."/>
        </authorList>
    </citation>
    <scope>NUCLEOTIDE SEQUENCE [MRNA] (ISOFORM 1)</scope>
</reference>
<reference key="6">
    <citation type="journal article" date="1988" name="Nucleic Acids Res.">
        <title>Nucleotide sequence of the tissue-type plasminogen activator cDNA from human fetal lung cells.</title>
        <authorList>
            <person name="Sasaki H."/>
            <person name="Saito Y."/>
            <person name="Hayashi M."/>
            <person name="Otsuka K."/>
            <person name="Niwa M."/>
        </authorList>
    </citation>
    <scope>NUCLEOTIDE SEQUENCE [MRNA] (ISOFORM 1)</scope>
    <source>
        <tissue>Fetal lung</tissue>
    </source>
</reference>
<reference key="7">
    <citation type="journal article" date="1990" name="Nucleic Acids Res.">
        <title>Variant tissue-type plasminogen activator (PLAT) cDNA obtained from human endothelial cells.</title>
        <authorList>
            <person name="Siebert P.D."/>
            <person name="Fong K."/>
        </authorList>
    </citation>
    <scope>NUCLEOTIDE SEQUENCE [MRNA] (ISOFORM 2)</scope>
    <source>
        <tissue>Umbilical vein</tissue>
    </source>
</reference>
<reference key="8">
    <citation type="submission" date="2000-04" db="EMBL/GenBank/DDBJ databases">
        <title>A brain-type plasminogen activator.</title>
        <authorList>
            <person name="Dou D."/>
        </authorList>
    </citation>
    <scope>NUCLEOTIDE SEQUENCE [MRNA] (ISOFORM 4)</scope>
</reference>
<reference key="9">
    <citation type="submission" date="2003-01" db="EMBL/GenBank/DDBJ databases">
        <title>cDNA of tissue plasminogen activator.</title>
        <authorList>
            <person name="Liu Y."/>
            <person name="Xu L."/>
            <person name="Zeng Y."/>
            <person name="He X."/>
        </authorList>
    </citation>
    <scope>NUCLEOTIDE SEQUENCE [MRNA] (ISOFORM 1)</scope>
</reference>
<reference key="10">
    <citation type="journal article" date="2004" name="Nat. Genet.">
        <title>Complete sequencing and characterization of 21,243 full-length human cDNAs.</title>
        <authorList>
            <person name="Ota T."/>
            <person name="Suzuki Y."/>
            <person name="Nishikawa T."/>
            <person name="Otsuki T."/>
            <person name="Sugiyama T."/>
            <person name="Irie R."/>
            <person name="Wakamatsu A."/>
            <person name="Hayashi K."/>
            <person name="Sato H."/>
            <person name="Nagai K."/>
            <person name="Kimura K."/>
            <person name="Makita H."/>
            <person name="Sekine M."/>
            <person name="Obayashi M."/>
            <person name="Nishi T."/>
            <person name="Shibahara T."/>
            <person name="Tanaka T."/>
            <person name="Ishii S."/>
            <person name="Yamamoto J."/>
            <person name="Saito K."/>
            <person name="Kawai Y."/>
            <person name="Isono Y."/>
            <person name="Nakamura Y."/>
            <person name="Nagahari K."/>
            <person name="Murakami K."/>
            <person name="Yasuda T."/>
            <person name="Iwayanagi T."/>
            <person name="Wagatsuma M."/>
            <person name="Shiratori A."/>
            <person name="Sudo H."/>
            <person name="Hosoiri T."/>
            <person name="Kaku Y."/>
            <person name="Kodaira H."/>
            <person name="Kondo H."/>
            <person name="Sugawara M."/>
            <person name="Takahashi M."/>
            <person name="Kanda K."/>
            <person name="Yokoi T."/>
            <person name="Furuya T."/>
            <person name="Kikkawa E."/>
            <person name="Omura Y."/>
            <person name="Abe K."/>
            <person name="Kamihara K."/>
            <person name="Katsuta N."/>
            <person name="Sato K."/>
            <person name="Tanikawa M."/>
            <person name="Yamazaki M."/>
            <person name="Ninomiya K."/>
            <person name="Ishibashi T."/>
            <person name="Yamashita H."/>
            <person name="Murakawa K."/>
            <person name="Fujimori K."/>
            <person name="Tanai H."/>
            <person name="Kimata M."/>
            <person name="Watanabe M."/>
            <person name="Hiraoka S."/>
            <person name="Chiba Y."/>
            <person name="Ishida S."/>
            <person name="Ono Y."/>
            <person name="Takiguchi S."/>
            <person name="Watanabe S."/>
            <person name="Yosida M."/>
            <person name="Hotuta T."/>
            <person name="Kusano J."/>
            <person name="Kanehori K."/>
            <person name="Takahashi-Fujii A."/>
            <person name="Hara H."/>
            <person name="Tanase T.-O."/>
            <person name="Nomura Y."/>
            <person name="Togiya S."/>
            <person name="Komai F."/>
            <person name="Hara R."/>
            <person name="Takeuchi K."/>
            <person name="Arita M."/>
            <person name="Imose N."/>
            <person name="Musashino K."/>
            <person name="Yuuki H."/>
            <person name="Oshima A."/>
            <person name="Sasaki N."/>
            <person name="Aotsuka S."/>
            <person name="Yoshikawa Y."/>
            <person name="Matsunawa H."/>
            <person name="Ichihara T."/>
            <person name="Shiohata N."/>
            <person name="Sano S."/>
            <person name="Moriya S."/>
            <person name="Momiyama H."/>
            <person name="Satoh N."/>
            <person name="Takami S."/>
            <person name="Terashima Y."/>
            <person name="Suzuki O."/>
            <person name="Nakagawa S."/>
            <person name="Senoh A."/>
            <person name="Mizoguchi H."/>
            <person name="Goto Y."/>
            <person name="Shimizu F."/>
            <person name="Wakebe H."/>
            <person name="Hishigaki H."/>
            <person name="Watanabe T."/>
            <person name="Sugiyama A."/>
            <person name="Takemoto M."/>
            <person name="Kawakami B."/>
            <person name="Yamazaki M."/>
            <person name="Watanabe K."/>
            <person name="Kumagai A."/>
            <person name="Itakura S."/>
            <person name="Fukuzumi Y."/>
            <person name="Fujimori Y."/>
            <person name="Komiyama M."/>
            <person name="Tashiro H."/>
            <person name="Tanigami A."/>
            <person name="Fujiwara T."/>
            <person name="Ono T."/>
            <person name="Yamada K."/>
            <person name="Fujii Y."/>
            <person name="Ozaki K."/>
            <person name="Hirao M."/>
            <person name="Ohmori Y."/>
            <person name="Kawabata A."/>
            <person name="Hikiji T."/>
            <person name="Kobatake N."/>
            <person name="Inagaki H."/>
            <person name="Ikema Y."/>
            <person name="Okamoto S."/>
            <person name="Okitani R."/>
            <person name="Kawakami T."/>
            <person name="Noguchi S."/>
            <person name="Itoh T."/>
            <person name="Shigeta K."/>
            <person name="Senba T."/>
            <person name="Matsumura K."/>
            <person name="Nakajima Y."/>
            <person name="Mizuno T."/>
            <person name="Morinaga M."/>
            <person name="Sasaki M."/>
            <person name="Togashi T."/>
            <person name="Oyama M."/>
            <person name="Hata H."/>
            <person name="Watanabe M."/>
            <person name="Komatsu T."/>
            <person name="Mizushima-Sugano J."/>
            <person name="Satoh T."/>
            <person name="Shirai Y."/>
            <person name="Takahashi Y."/>
            <person name="Nakagawa K."/>
            <person name="Okumura K."/>
            <person name="Nagase T."/>
            <person name="Nomura N."/>
            <person name="Kikuchi H."/>
            <person name="Masuho Y."/>
            <person name="Yamashita R."/>
            <person name="Nakai K."/>
            <person name="Yada T."/>
            <person name="Nakamura Y."/>
            <person name="Ohara O."/>
            <person name="Isogai T."/>
            <person name="Sugano S."/>
        </authorList>
    </citation>
    <scope>NUCLEOTIDE SEQUENCE [LARGE SCALE MRNA] (ISOFORMS 1 AND 3)</scope>
    <source>
        <tissue>Testis</tissue>
    </source>
</reference>
<reference key="11">
    <citation type="submission" date="2003-05" db="EMBL/GenBank/DDBJ databases">
        <title>Cloning of human full-length CDSs in BD Creator(TM) system donor vector.</title>
        <authorList>
            <person name="Kalnine N."/>
            <person name="Chen X."/>
            <person name="Rolfs A."/>
            <person name="Halleck A."/>
            <person name="Hines L."/>
            <person name="Eisenstein S."/>
            <person name="Koundinya M."/>
            <person name="Raphael J."/>
            <person name="Moreira D."/>
            <person name="Kelley T."/>
            <person name="LaBaer J."/>
            <person name="Lin Y."/>
            <person name="Phelan M."/>
            <person name="Farmer A."/>
        </authorList>
    </citation>
    <scope>NUCLEOTIDE SEQUENCE [LARGE SCALE MRNA] (ISOFORM 1)</scope>
</reference>
<reference key="12">
    <citation type="submission" date="2003-05" db="EMBL/GenBank/DDBJ databases">
        <authorList>
            <consortium name="SeattleSNPs variation discovery resource"/>
        </authorList>
    </citation>
    <scope>NUCLEOTIDE SEQUENCE [GENOMIC DNA]</scope>
    <scope>VARIANTS ASP-34; SER-136; THR-146 AND TRP-164</scope>
</reference>
<reference key="13">
    <citation type="submission" date="2005-09" db="EMBL/GenBank/DDBJ databases">
        <authorList>
            <person name="Mural R.J."/>
            <person name="Istrail S."/>
            <person name="Sutton G.G."/>
            <person name="Florea L."/>
            <person name="Halpern A.L."/>
            <person name="Mobarry C.M."/>
            <person name="Lippert R."/>
            <person name="Walenz B."/>
            <person name="Shatkay H."/>
            <person name="Dew I."/>
            <person name="Miller J.R."/>
            <person name="Flanigan M.J."/>
            <person name="Edwards N.J."/>
            <person name="Bolanos R."/>
            <person name="Fasulo D."/>
            <person name="Halldorsson B.V."/>
            <person name="Hannenhalli S."/>
            <person name="Turner R."/>
            <person name="Yooseph S."/>
            <person name="Lu F."/>
            <person name="Nusskern D.R."/>
            <person name="Shue B.C."/>
            <person name="Zheng X.H."/>
            <person name="Zhong F."/>
            <person name="Delcher A.L."/>
            <person name="Huson D.H."/>
            <person name="Kravitz S.A."/>
            <person name="Mouchard L."/>
            <person name="Reinert K."/>
            <person name="Remington K.A."/>
            <person name="Clark A.G."/>
            <person name="Waterman M.S."/>
            <person name="Eichler E.E."/>
            <person name="Adams M.D."/>
            <person name="Hunkapiller M.W."/>
            <person name="Myers E.W."/>
            <person name="Venter J.C."/>
        </authorList>
    </citation>
    <scope>NUCLEOTIDE SEQUENCE [LARGE SCALE GENOMIC DNA]</scope>
</reference>
<reference key="14">
    <citation type="journal article" date="2004" name="Genome Res.">
        <title>The status, quality, and expansion of the NIH full-length cDNA project: the Mammalian Gene Collection (MGC).</title>
        <authorList>
            <consortium name="The MGC Project Team"/>
        </authorList>
    </citation>
    <scope>NUCLEOTIDE SEQUENCE [LARGE SCALE MRNA] (ISOFORMS 1 AND 3)</scope>
    <source>
        <tissue>Brain</tissue>
        <tissue>Placenta</tissue>
        <tissue>Skin</tissue>
    </source>
</reference>
<reference key="15">
    <citation type="journal article" date="1985" name="J. Biol. Chem.">
        <title>Isolation and characterization of the human tissue-type plasminogen activator structural gene including its 5' flanking region.</title>
        <authorList>
            <person name="Fisher R."/>
            <person name="Waller E.K."/>
            <person name="Grossi G."/>
            <person name="Thompson D."/>
            <person name="Tizard R."/>
            <person name="Schleuning W.-D."/>
        </authorList>
    </citation>
    <scope>NUCLEOTIDE SEQUENCE [GENOMIC DNA] OF 1-36</scope>
</reference>
<reference key="16">
    <citation type="journal article" date="1991" name="Agric. Biol. Chem.">
        <title>Purification and characterization of tissue plasminogen activator secreted by human embryonic lung diploid fibroblasts, IMR-90 cells.</title>
        <authorList>
            <person name="Itagaki Y."/>
            <person name="Yasuda H."/>
            <person name="Morinaga T."/>
            <person name="Mitsuda S."/>
            <person name="Higashio K."/>
        </authorList>
    </citation>
    <scope>NUCLEOTIDE SEQUENCE [MRNA] OF 31-562</scope>
</reference>
<reference key="17">
    <citation type="journal article" date="1983" name="Eur. J. Biochem.">
        <title>Purification and characterization of a melanoma cell plasminogen activator.</title>
        <authorList>
            <person name="Wallen P."/>
            <person name="Pohl G."/>
            <person name="Bergsdorf N."/>
            <person name="Raanby M."/>
            <person name="Ny T."/>
            <person name="Joernvall H."/>
        </authorList>
    </citation>
    <scope>PROTEIN SEQUENCE OF 33-52 AND 311-330</scope>
    <source>
        <tissue>Melanoma</tissue>
    </source>
</reference>
<reference key="18">
    <citation type="journal article" date="1984" name="Biochemistry">
        <title>Tissue plasminogen activator: peptide analyses confirm an indirectly derived amino acid sequence, identify the active site serine residue, establish glycosylation sites, and localize variant differences.</title>
        <authorList>
            <person name="Pohl G."/>
            <person name="Kaellstroem M."/>
            <person name="Bergsdorf N."/>
            <person name="Wallen P."/>
            <person name="Joernvall H."/>
        </authorList>
    </citation>
    <scope>PROTEIN SEQUENCE OF 36-562</scope>
    <source>
        <tissue>Melanoma</tissue>
    </source>
</reference>
<reference key="19">
    <citation type="journal article" date="1983" name="Proc. Natl. Acad. Sci. U.S.A.">
        <title>Isolation of cDNA sequences coding for a part of human tissue plasminogen activator.</title>
        <authorList>
            <person name="Edlund T."/>
            <person name="Ny T."/>
            <person name="Raanby M."/>
            <person name="Heden L.-O."/>
            <person name="Palm G."/>
            <person name="Holmgren E."/>
            <person name="Josephson S."/>
        </authorList>
    </citation>
    <scope>NUCLEOTIDE SEQUENCE [MRNA] OF 251-358</scope>
</reference>
<reference key="20">
    <citation type="submission" date="2007-07" db="UniProtKB">
        <authorList>
            <person name="Jalah R."/>
            <person name="Pavlakis G.N."/>
            <person name="Felber B.J."/>
        </authorList>
    </citation>
    <scope>PARTIAL PROTEIN SEQUENCE</scope>
    <scope>SIGNAL SEQUENCE CLEAVAGE SITE</scope>
</reference>
<reference key="21">
    <citation type="journal article" date="1989" name="Eur. J. Biochem.">
        <title>Carbohydrate structure of recombinant human uterine tissue plasminogen activator expressed in mouse epithelial cells.</title>
        <authorList>
            <person name="Pfeiffer G."/>
            <person name="Schmidt M."/>
            <person name="Strube K.-H."/>
            <person name="Geyer R."/>
        </authorList>
    </citation>
    <scope>GLYCOSYLATION AT ASN-152; ASN-219 AND ASN-483</scope>
    <scope>STRUCTURE OF CARBOHYDRATES</scope>
</reference>
<reference key="22">
    <citation type="journal article" date="1991" name="Biochemistry">
        <title>Tissue plasminogen activator has an O-linked fucose attached to threonine-61 in the epidermal growth factor domain.</title>
        <authorList>
            <person name="Harris R.J."/>
            <person name="Leonard C.K."/>
            <person name="Guzzetta A.W."/>
            <person name="Spellman M.W."/>
        </authorList>
    </citation>
    <scope>GLYCOSYLATION AT THR-96</scope>
</reference>
<reference key="23">
    <citation type="journal article" date="1991" name="J. Biol. Chem.">
        <title>Disulfide pairing of the recombinant kringle-2 domain of tissue plasminogen activator produced in Escherichia coli.</title>
        <authorList>
            <person name="Vlahos C.J."/>
            <person name="Wilhelm O.G."/>
            <person name="Hassell T."/>
            <person name="Jaskunas S.R."/>
            <person name="Bang N.U."/>
        </authorList>
    </citation>
    <scope>DISULFIDE BONDS IN KRINGLE 2 DOMAIN</scope>
</reference>
<reference key="24">
    <citation type="journal article" date="1999" name="Mol. Hum. Reprod.">
        <title>Functionally inactive protein C inhibitor in seminal plasma may be associated with infertility.</title>
        <authorList>
            <person name="He S."/>
            <person name="Lin Y.L."/>
            <person name="Liu Y.X."/>
        </authorList>
    </citation>
    <scope>ACTIVITY REGULATION</scope>
    <scope>HETERODIMER WITH SERPINA5</scope>
</reference>
<reference key="25">
    <citation type="journal article" date="2001" name="J. Biol. Chem.">
        <title>The putative tumor suppressor LRP1B, a novel member of the low density lipoprotein (LDL) receptor family, exhibits both overlapping and distinct properties with the LDL receptor-related protein.</title>
        <authorList>
            <person name="Liu C.-X."/>
            <person name="Li Y."/>
            <person name="Obermoeller-McCormick L.M."/>
            <person name="Schwartz A.L."/>
            <person name="Bu G."/>
        </authorList>
    </citation>
    <scope>INTERACTION WITH LRP1B</scope>
</reference>
<reference key="26">
    <citation type="journal article" date="2004" name="Biochem. J.">
        <title>The mosaic receptor sorLA/LR11 binds components of the plasminogen-activating system and platelet-derived growth factor-BB similarly to LRP1 (low-density lipoprotein receptor-related protein), but mediates slow internalization of bound ligand.</title>
        <authorList>
            <person name="Gliemann J."/>
            <person name="Hermey G."/>
            <person name="Nykjaer A."/>
            <person name="Petersen C.M."/>
            <person name="Jacobsen C."/>
            <person name="Andreasen P.A."/>
        </authorList>
    </citation>
    <scope>INTERACTION WITH SERPINE1 AND SORL1</scope>
</reference>
<reference key="27">
    <citation type="journal article" date="2004" name="Genome Biol.">
        <title>An unappreciated role for RNA surveillance.</title>
        <authorList>
            <person name="Hillman R.T."/>
            <person name="Green R.E."/>
            <person name="Brenner S.E."/>
        </authorList>
    </citation>
    <scope>SPLICE ISOFORM(S) THAT ARE POTENTIAL NMD TARGET(S)</scope>
</reference>
<reference key="28">
    <citation type="journal article" date="2011" name="Biochem. Biophys. Res. Commun.">
        <title>Longistatin, a novel plasminogen activator from vector ticks, is resistant to plasminogen activator inhibitor-1.</title>
        <authorList>
            <person name="Anisuzzaman X."/>
            <person name="Khyrul Islam M."/>
            <person name="Abdul Alim M."/>
            <person name="Miyoshi T."/>
            <person name="Hatta T."/>
            <person name="Yamaji K."/>
            <person name="Matsumoto Y."/>
            <person name="Fujisaki K."/>
            <person name="Tsuji N."/>
        </authorList>
    </citation>
    <scope>ACTIVITY REGULATION</scope>
    <scope>INTERACTION WITH SERPINE1</scope>
</reference>
<reference key="29">
    <citation type="journal article" date="2024" name="Nat. Commun.">
        <title>Mosquito salivary apyrase regulates blood meal hemostasis and facilitates malaria parasite transmission.</title>
        <authorList>
            <person name="Pala Z.R."/>
            <person name="Alves E Silva T.L."/>
            <person name="Minai M."/>
            <person name="Crews B."/>
            <person name="Patino-Martinez E."/>
            <person name="Carmona-Rivera C."/>
            <person name="Valenzuela Leon P.C."/>
            <person name="Martin-Martin I."/>
            <person name="Flores-Garcia Y."/>
            <person name="Cachau R.E."/>
            <person name="Muslinkina L."/>
            <person name="Gittis A.G."/>
            <person name="Srivastava N."/>
            <person name="Garboczi D.N."/>
            <person name="Alves D.A."/>
            <person name="Kaplan M.J."/>
            <person name="Fischer E."/>
            <person name="Calvo E."/>
            <person name="Vega-Rodriguez J."/>
        </authorList>
    </citation>
    <scope>INTERACTION WITH MOSQUITO APYRASE</scope>
</reference>
<reference key="30">
    <citation type="journal article" date="1989" name="Biochemistry">
        <title>1H NMR structural characterization of a recombinant kringle 2 domain from human tissue-type plasminogen activator.</title>
        <authorList>
            <person name="Byeon I.-J.L."/>
            <person name="Kelley R.F."/>
            <person name="Llinas M."/>
        </authorList>
    </citation>
    <scope>STRUCTURE BY NMR OF KRINGLE 2</scope>
</reference>
<reference key="31">
    <citation type="journal article" date="1991" name="Eur. J. Biochem.">
        <title>Kringle-2 domain of the tissue-type plasminogen activator. 1H-NMR assignments and secondary structure.</title>
        <authorList>
            <person name="Byeon I.-J.L."/>
            <person name="Kelley R.F."/>
            <person name="Llinas M."/>
        </authorList>
    </citation>
    <scope>STRUCTURE BY NMR OF KRINGLE 2</scope>
</reference>
<reference key="32">
    <citation type="journal article" date="1991" name="J. Mol. Biol.">
        <title>Solution structure of the tissue-type plasminogen activator kringle 2 domain complexed to 6-aminohexanoic acid an antifibrinolytic drug.</title>
        <authorList>
            <person name="Byeon I.-J.L."/>
            <person name="Llinas M."/>
        </authorList>
    </citation>
    <scope>STRUCTURE BY NMR OF KRINGLE 2</scope>
</reference>
<reference key="33">
    <citation type="journal article" date="1992" name="Biochemistry">
        <title>Crystal structure of the kringle 2 domain of tissue plasminogen activator at 2.4-A resolution.</title>
        <authorList>
            <person name="de Vos A."/>
            <person name="Ultsch M.H."/>
            <person name="Kelley R.F."/>
            <person name="Padmanabhan K."/>
            <person name="Tulinskly A."/>
            <person name="Westbrook M.L."/>
            <person name="Kossiakof A.A."/>
        </authorList>
    </citation>
    <scope>X-RAY CRYSTALLOGRAPHY (2.4 ANGSTROMS) OF KRINGLE 2</scope>
</reference>
<reference key="34">
    <citation type="journal article" date="1992" name="J. Mol. Biol.">
        <title>Solution structure of the fibrin binding finger domain of tissue-type plasminogen activator determined by 1H nuclear magnetic resonance.</title>
        <authorList>
            <person name="Downing A.K."/>
            <person name="Driscoll P.C."/>
            <person name="Harvey T.S."/>
            <person name="Dudgeon T.J."/>
            <person name="Smith B.O."/>
            <person name="Baron M."/>
            <person name="Campbell I.D."/>
        </authorList>
    </citation>
    <scope>STRUCTURE BY NMR OF 38-85</scope>
</reference>
<reference key="35">
    <citation type="journal article" date="1995" name="Structure">
        <title>The solution structure and backbone dynamics of the fibronectin type I and epidermal growth factor-like pair of modules of tissue-type plasminogen activator.</title>
        <authorList>
            <person name="Smith B.O."/>
            <person name="Downing A.K."/>
            <person name="Driscoll P.C."/>
            <person name="Dudgeon T.J."/>
            <person name="Campbell I.D."/>
        </authorList>
    </citation>
    <scope>STRUCTURE BY NMR OF 36-126</scope>
</reference>
<reference key="36">
    <citation type="journal article" date="1996" name="J. Mol. Biol.">
        <title>The 2.3 A crystal structure of the catalytic domain of recombinant two-chain human tissue-type plasminogen activator.</title>
        <authorList>
            <person name="Lamba D."/>
            <person name="Bauer M."/>
            <person name="Huber R."/>
            <person name="Fischer S."/>
            <person name="Rudolph R."/>
            <person name="Kohnert U."/>
            <person name="Bode W."/>
        </authorList>
    </citation>
    <scope>X-RAY CRYSTALLOGRAPHY (2.3 ANGSTROMS) OF CATALYTIC DOMAIN</scope>
</reference>
<reference key="37">
    <citation type="journal article" date="1997" name="EMBO J.">
        <title>Lysine 156 promotes the anomalous proenzyme activity of tPA: X-ray crystal structure of single-chain human tPA.</title>
        <authorList>
            <person name="Renatus M."/>
            <person name="Engh R.A."/>
            <person name="Stubbs M.T."/>
            <person name="Huber R."/>
            <person name="Fischer S."/>
            <person name="Kohnert U."/>
            <person name="Bode W."/>
        </authorList>
    </citation>
    <scope>X-RAY CRYSTALLOGRAPHY (3.1 ANGSTROMS) OF CATALYTIC DOMAIN</scope>
</reference>
<name>TPA_HUMAN</name>
<feature type="signal peptide" evidence="18">
    <location>
        <begin position="1"/>
        <end position="22"/>
    </location>
</feature>
<feature type="propeptide" id="PRO_0000028348" evidence="16">
    <location>
        <begin position="23"/>
        <end position="32"/>
    </location>
</feature>
<feature type="propeptide" id="PRO_0000028349" description="Removed by plasmin" evidence="15">
    <location>
        <begin position="33"/>
        <end position="35"/>
    </location>
</feature>
<feature type="chain" id="PRO_0000028350" description="Tissue-type plasminogen activator">
    <location>
        <begin position="36"/>
        <end position="562"/>
    </location>
</feature>
<feature type="chain" id="PRO_0000028351" description="Tissue-type plasminogen activator chain A">
    <location>
        <begin position="36"/>
        <end position="310"/>
    </location>
</feature>
<feature type="chain" id="PRO_0000028352" description="Tissue-type plasminogen activator chain B">
    <location>
        <begin position="311"/>
        <end position="562"/>
    </location>
</feature>
<feature type="domain" description="Fibronectin type-I" evidence="6">
    <location>
        <begin position="39"/>
        <end position="81"/>
    </location>
</feature>
<feature type="domain" description="EGF-like" evidence="3">
    <location>
        <begin position="82"/>
        <end position="120"/>
    </location>
</feature>
<feature type="domain" description="Kringle 1" evidence="4">
    <location>
        <begin position="127"/>
        <end position="208"/>
    </location>
</feature>
<feature type="domain" description="Kringle 2" evidence="4">
    <location>
        <begin position="215"/>
        <end position="296"/>
    </location>
</feature>
<feature type="domain" description="Peptidase S1" evidence="5">
    <location>
        <begin position="311"/>
        <end position="561"/>
    </location>
</feature>
<feature type="region of interest" description="Important for binding to annexin A2">
    <location>
        <begin position="42"/>
        <end position="52"/>
    </location>
</feature>
<feature type="active site" description="Charge relay system" evidence="24">
    <location>
        <position position="357"/>
    </location>
</feature>
<feature type="active site" description="Charge relay system" evidence="24">
    <location>
        <position position="406"/>
    </location>
</feature>
<feature type="active site" description="Charge relay system" evidence="24">
    <location>
        <position position="513"/>
    </location>
</feature>
<feature type="site" description="Important for binding to LRP1">
    <location>
        <position position="102"/>
    </location>
</feature>
<feature type="site" description="Not glycosylated">
    <location>
        <position position="253"/>
    </location>
</feature>
<feature type="site" description="Important for single-chain activity">
    <location>
        <position position="464"/>
    </location>
</feature>
<feature type="site" description="Important for single-chain activity">
    <location>
        <position position="512"/>
    </location>
</feature>
<feature type="glycosylation site" id="CAR_000029" description="O-linked (Fuc) threonine" evidence="11">
    <location>
        <position position="96"/>
    </location>
</feature>
<feature type="glycosylation site" description="N-linked (GlcNAc...) asparagine" evidence="13">
    <location>
        <position position="152"/>
    </location>
</feature>
<feature type="glycosylation site" id="CAR_000030" description="N-linked (GlcNAc...) asparagine; partial" evidence="13">
    <location>
        <position position="219"/>
    </location>
</feature>
<feature type="glycosylation site" id="CAR_000031" description="N-linked (GlcNAc...) asparagine" evidence="13">
    <location>
        <position position="483"/>
    </location>
</feature>
<feature type="disulfide bond" evidence="9">
    <location>
        <begin position="41"/>
        <end position="71"/>
    </location>
</feature>
<feature type="disulfide bond" evidence="9">
    <location>
        <begin position="69"/>
        <end position="78"/>
    </location>
</feature>
<feature type="disulfide bond" evidence="9">
    <location>
        <begin position="86"/>
        <end position="97"/>
    </location>
</feature>
<feature type="disulfide bond" evidence="9">
    <location>
        <begin position="91"/>
        <end position="108"/>
    </location>
</feature>
<feature type="disulfide bond" evidence="9">
    <location>
        <begin position="110"/>
        <end position="119"/>
    </location>
</feature>
<feature type="disulfide bond" evidence="1">
    <location>
        <begin position="127"/>
        <end position="208"/>
    </location>
</feature>
<feature type="disulfide bond" evidence="1">
    <location>
        <begin position="148"/>
        <end position="190"/>
    </location>
</feature>
<feature type="disulfide bond" evidence="1">
    <location>
        <begin position="179"/>
        <end position="203"/>
    </location>
</feature>
<feature type="disulfide bond" evidence="9">
    <location>
        <begin position="215"/>
        <end position="296"/>
    </location>
</feature>
<feature type="disulfide bond" evidence="9">
    <location>
        <begin position="236"/>
        <end position="278"/>
    </location>
</feature>
<feature type="disulfide bond" evidence="9">
    <location>
        <begin position="267"/>
        <end position="291"/>
    </location>
</feature>
<feature type="disulfide bond" description="Interchain (between A and B chains)" evidence="3 4 5 6 9">
    <location>
        <begin position="299"/>
        <end position="430"/>
    </location>
</feature>
<feature type="disulfide bond" evidence="1">
    <location>
        <begin position="342"/>
        <end position="358"/>
    </location>
</feature>
<feature type="disulfide bond" evidence="1">
    <location>
        <begin position="350"/>
        <end position="419"/>
    </location>
</feature>
<feature type="disulfide bond" evidence="1">
    <location>
        <begin position="444"/>
        <end position="519"/>
    </location>
</feature>
<feature type="disulfide bond" evidence="1">
    <location>
        <begin position="476"/>
        <end position="492"/>
    </location>
</feature>
<feature type="disulfide bond" evidence="1">
    <location>
        <begin position="509"/>
        <end position="537"/>
    </location>
</feature>
<feature type="splice variant" id="VSP_028029" description="In isoform 4." evidence="22">
    <original>MDAMKRGLCCVLLLCGAVFVSPSQEIHARFRRGARSYQVI</original>
    <variation>MAS</variation>
    <location>
        <begin position="1"/>
        <end position="40"/>
    </location>
</feature>
<feature type="splice variant" id="VSP_015957" description="In isoform 3." evidence="19 20">
    <original>VICRDEKTQMIYQQHQSWLRPVLRSNRVEYCWCNSGRAQCHSVPVKS</original>
    <variation>G</variation>
    <location>
        <begin position="39"/>
        <end position="85"/>
    </location>
</feature>
<feature type="splice variant" id="VSP_028030" description="In isoform 4." evidence="22">
    <location>
        <begin position="79"/>
        <end position="208"/>
    </location>
</feature>
<feature type="splice variant" id="VSP_005411" description="In isoform 2." evidence="21">
    <original>NPDGDAKPWCHVLKNRRLTWEYC</original>
    <variation>TGRSVSSPATASMRPCPLSIRSG</variation>
    <location>
        <begin position="269"/>
        <end position="291"/>
    </location>
</feature>
<feature type="splice variant" id="VSP_005412" description="In isoform 2." evidence="21">
    <location>
        <begin position="292"/>
        <end position="562"/>
    </location>
</feature>
<feature type="sequence variant" id="VAR_020181" description="In dbSNP:rs8178733." evidence="17">
    <original>A</original>
    <variation>D</variation>
    <location>
        <position position="34"/>
    </location>
</feature>
<feature type="sequence variant" id="VAR_038732" description="In dbSNP:rs8178747." evidence="17">
    <original>R</original>
    <variation>S</variation>
    <location>
        <position position="136"/>
    </location>
</feature>
<feature type="sequence variant" id="VAR_038733" description="In dbSNP:rs8178748." evidence="17">
    <original>A</original>
    <variation>T</variation>
    <location>
        <position position="146"/>
    </location>
</feature>
<feature type="sequence variant" id="VAR_011783" description="In dbSNP:rs2020921." evidence="17">
    <original>R</original>
    <variation>W</variation>
    <location>
        <position position="164"/>
    </location>
</feature>
<feature type="sequence conflict" description="In Ref. 2; AAB59510." evidence="23" ref="2">
    <original>N</original>
    <variation>T</variation>
    <location>
        <position position="93"/>
    </location>
</feature>
<feature type="sequence conflict" description="In Ref. 7; CAA31489." evidence="23" ref="7">
    <original>KP</original>
    <variation>NA</variation>
    <location>
        <begin position="159"/>
        <end position="160"/>
    </location>
</feature>
<feature type="sequence conflict" description="In Ref. 9; AAO34406." evidence="23" ref="9">
    <original>K</original>
    <variation>N</variation>
    <location>
        <position position="247"/>
    </location>
</feature>
<feature type="sequence conflict" description="In Ref. 14; AAH95403." evidence="23" ref="14">
    <original>N</original>
    <variation>S</variation>
    <location>
        <position position="283"/>
    </location>
</feature>
<feature type="sequence conflict" description="In Ref. 8; AAK11956." evidence="23" ref="8">
    <original>RR</original>
    <variation>EE</variation>
    <location>
        <begin position="333"/>
        <end position="334"/>
    </location>
</feature>
<feature type="sequence conflict" description="In Ref. 8; AAK11956." evidence="23" ref="8">
    <original>V</original>
    <variation>C</variation>
    <location>
        <position position="389"/>
    </location>
</feature>
<feature type="strand" evidence="32">
    <location>
        <begin position="41"/>
        <end position="43"/>
    </location>
</feature>
<feature type="strand" evidence="31">
    <location>
        <begin position="44"/>
        <end position="46"/>
    </location>
</feature>
<feature type="strand" evidence="32">
    <location>
        <begin position="48"/>
        <end position="50"/>
    </location>
</feature>
<feature type="strand" evidence="31">
    <location>
        <begin position="55"/>
        <end position="59"/>
    </location>
</feature>
<feature type="strand" evidence="31">
    <location>
        <begin position="61"/>
        <end position="64"/>
    </location>
</feature>
<feature type="strand" evidence="31">
    <location>
        <begin position="66"/>
        <end position="70"/>
    </location>
</feature>
<feature type="strand" evidence="31">
    <location>
        <begin position="72"/>
        <end position="74"/>
    </location>
</feature>
<feature type="strand" evidence="32">
    <location>
        <begin position="77"/>
        <end position="81"/>
    </location>
</feature>
<feature type="strand" evidence="31">
    <location>
        <begin position="83"/>
        <end position="85"/>
    </location>
</feature>
<feature type="strand" evidence="31">
    <location>
        <begin position="96"/>
        <end position="104"/>
    </location>
</feature>
<feature type="strand" evidence="31">
    <location>
        <begin position="106"/>
        <end position="109"/>
    </location>
</feature>
<feature type="strand" evidence="31">
    <location>
        <begin position="115"/>
        <end position="118"/>
    </location>
</feature>
<feature type="strand" evidence="28">
    <location>
        <begin position="221"/>
        <end position="223"/>
    </location>
</feature>
<feature type="strand" evidence="28">
    <location>
        <begin position="229"/>
        <end position="233"/>
    </location>
</feature>
<feature type="helix" evidence="29">
    <location>
        <begin position="242"/>
        <end position="244"/>
    </location>
</feature>
<feature type="strand" evidence="29">
    <location>
        <begin position="248"/>
        <end position="250"/>
    </location>
</feature>
<feature type="strand" evidence="28">
    <location>
        <begin position="251"/>
        <end position="253"/>
    </location>
</feature>
<feature type="helix" evidence="29">
    <location>
        <begin position="256"/>
        <end position="259"/>
    </location>
</feature>
<feature type="strand" evidence="29">
    <location>
        <begin position="262"/>
        <end position="264"/>
    </location>
</feature>
<feature type="strand" evidence="29">
    <location>
        <begin position="277"/>
        <end position="282"/>
    </location>
</feature>
<feature type="strand" evidence="29">
    <location>
        <begin position="285"/>
        <end position="291"/>
    </location>
</feature>
<feature type="strand" evidence="27">
    <location>
        <begin position="309"/>
        <end position="311"/>
    </location>
</feature>
<feature type="strand" evidence="30">
    <location>
        <begin position="312"/>
        <end position="316"/>
    </location>
</feature>
<feature type="helix" evidence="30">
    <location>
        <begin position="319"/>
        <end position="321"/>
    </location>
</feature>
<feature type="strand" evidence="30">
    <location>
        <begin position="325"/>
        <end position="331"/>
    </location>
</feature>
<feature type="strand" evidence="30">
    <location>
        <begin position="338"/>
        <end position="346"/>
    </location>
</feature>
<feature type="strand" evidence="30">
    <location>
        <begin position="348"/>
        <end position="354"/>
    </location>
</feature>
<feature type="helix" evidence="30">
    <location>
        <begin position="356"/>
        <end position="359"/>
    </location>
</feature>
<feature type="helix" evidence="30">
    <location>
        <begin position="365"/>
        <end position="367"/>
    </location>
</feature>
<feature type="strand" evidence="30">
    <location>
        <begin position="368"/>
        <end position="373"/>
    </location>
</feature>
<feature type="strand" evidence="30">
    <location>
        <begin position="375"/>
        <end position="379"/>
    </location>
</feature>
<feature type="strand" evidence="30">
    <location>
        <begin position="385"/>
        <end position="394"/>
    </location>
</feature>
<feature type="turn" evidence="30">
    <location>
        <begin position="400"/>
        <end position="402"/>
    </location>
</feature>
<feature type="strand" evidence="30">
    <location>
        <begin position="408"/>
        <end position="412"/>
    </location>
</feature>
<feature type="strand" evidence="30">
    <location>
        <begin position="415"/>
        <end position="417"/>
    </location>
</feature>
<feature type="strand" evidence="33">
    <location>
        <begin position="423"/>
        <end position="425"/>
    </location>
</feature>
<feature type="strand" evidence="30">
    <location>
        <begin position="443"/>
        <end position="449"/>
    </location>
</feature>
<feature type="strand" evidence="27">
    <location>
        <begin position="451"/>
        <end position="453"/>
    </location>
</feature>
<feature type="strand" evidence="30">
    <location>
        <begin position="464"/>
        <end position="470"/>
    </location>
</feature>
<feature type="helix" evidence="30">
    <location>
        <begin position="473"/>
        <end position="475"/>
    </location>
</feature>
<feature type="turn" evidence="30">
    <location>
        <begin position="478"/>
        <end position="483"/>
    </location>
</feature>
<feature type="strand" evidence="30">
    <location>
        <begin position="490"/>
        <end position="494"/>
    </location>
</feature>
<feature type="strand" evidence="26">
    <location>
        <begin position="499"/>
        <end position="501"/>
    </location>
</feature>
<feature type="strand" evidence="30">
    <location>
        <begin position="516"/>
        <end position="521"/>
    </location>
</feature>
<feature type="strand" evidence="30">
    <location>
        <begin position="524"/>
        <end position="533"/>
    </location>
</feature>
<feature type="strand" evidence="30">
    <location>
        <begin position="535"/>
        <end position="538"/>
    </location>
</feature>
<feature type="strand" evidence="30">
    <location>
        <begin position="544"/>
        <end position="548"/>
    </location>
</feature>
<feature type="helix" evidence="30">
    <location>
        <begin position="549"/>
        <end position="552"/>
    </location>
</feature>
<feature type="helix" evidence="30">
    <location>
        <begin position="553"/>
        <end position="559"/>
    </location>
</feature>